<evidence type="ECO:0000255" key="1">
    <source>
        <dbReference type="HAMAP-Rule" id="MF_00378"/>
    </source>
</evidence>
<reference key="1">
    <citation type="journal article" date="2007" name="Science">
        <title>The Calyptogena magnifica chemoautotrophic symbiont genome.</title>
        <authorList>
            <person name="Newton I.L.G."/>
            <person name="Woyke T."/>
            <person name="Auchtung T.A."/>
            <person name="Dilly G.F."/>
            <person name="Dutton R.J."/>
            <person name="Fisher M.C."/>
            <person name="Fontanez K.M."/>
            <person name="Lau E."/>
            <person name="Stewart F.J."/>
            <person name="Richardson P.M."/>
            <person name="Barry K.W."/>
            <person name="Saunders E."/>
            <person name="Detter J.C."/>
            <person name="Wu D."/>
            <person name="Eisen J.A."/>
            <person name="Cavanaugh C.M."/>
        </authorList>
    </citation>
    <scope>NUCLEOTIDE SEQUENCE [LARGE SCALE GENOMIC DNA]</scope>
</reference>
<protein>
    <recommendedName>
        <fullName evidence="1">Exodeoxyribonuclease 7 large subunit</fullName>
        <ecNumber evidence="1">3.1.11.6</ecNumber>
    </recommendedName>
    <alternativeName>
        <fullName evidence="1">Exodeoxyribonuclease VII large subunit</fullName>
        <shortName evidence="1">Exonuclease VII large subunit</shortName>
    </alternativeName>
</protein>
<organism>
    <name type="scientific">Ruthia magnifica subsp. Calyptogena magnifica</name>
    <dbReference type="NCBI Taxonomy" id="413404"/>
    <lineage>
        <taxon>Bacteria</taxon>
        <taxon>Pseudomonadati</taxon>
        <taxon>Pseudomonadota</taxon>
        <taxon>Gammaproteobacteria</taxon>
        <taxon>Candidatus Pseudothioglobaceae</taxon>
        <taxon>Candidatus Ruthturnera</taxon>
    </lineage>
</organism>
<name>EX7L_RUTMC</name>
<comment type="function">
    <text evidence="1">Bidirectionally degrades single-stranded DNA into large acid-insoluble oligonucleotides, which are then degraded further into small acid-soluble oligonucleotides.</text>
</comment>
<comment type="catalytic activity">
    <reaction evidence="1">
        <text>Exonucleolytic cleavage in either 5'- to 3'- or 3'- to 5'-direction to yield nucleoside 5'-phosphates.</text>
        <dbReference type="EC" id="3.1.11.6"/>
    </reaction>
</comment>
<comment type="subunit">
    <text evidence="1">Heterooligomer composed of large and small subunits.</text>
</comment>
<comment type="subcellular location">
    <subcellularLocation>
        <location evidence="1">Cytoplasm</location>
    </subcellularLocation>
</comment>
<comment type="similarity">
    <text evidence="1">Belongs to the XseA family.</text>
</comment>
<keyword id="KW-0963">Cytoplasm</keyword>
<keyword id="KW-0269">Exonuclease</keyword>
<keyword id="KW-0378">Hydrolase</keyword>
<keyword id="KW-0540">Nuclease</keyword>
<dbReference type="EC" id="3.1.11.6" evidence="1"/>
<dbReference type="EMBL" id="CP000488">
    <property type="protein sequence ID" value="ABL02477.1"/>
    <property type="molecule type" value="Genomic_DNA"/>
</dbReference>
<dbReference type="RefSeq" id="WP_011738102.1">
    <property type="nucleotide sequence ID" value="NC_008610.1"/>
</dbReference>
<dbReference type="SMR" id="A1AX20"/>
<dbReference type="STRING" id="413404.Rmag_0750"/>
<dbReference type="KEGG" id="rma:Rmag_0750"/>
<dbReference type="eggNOG" id="COG1570">
    <property type="taxonomic scope" value="Bacteria"/>
</dbReference>
<dbReference type="HOGENOM" id="CLU_023625_3_1_6"/>
<dbReference type="OrthoDB" id="9802795at2"/>
<dbReference type="Proteomes" id="UP000002587">
    <property type="component" value="Chromosome"/>
</dbReference>
<dbReference type="GO" id="GO:0005737">
    <property type="term" value="C:cytoplasm"/>
    <property type="evidence" value="ECO:0007669"/>
    <property type="project" value="UniProtKB-SubCell"/>
</dbReference>
<dbReference type="GO" id="GO:0009318">
    <property type="term" value="C:exodeoxyribonuclease VII complex"/>
    <property type="evidence" value="ECO:0007669"/>
    <property type="project" value="InterPro"/>
</dbReference>
<dbReference type="GO" id="GO:0008855">
    <property type="term" value="F:exodeoxyribonuclease VII activity"/>
    <property type="evidence" value="ECO:0007669"/>
    <property type="project" value="UniProtKB-UniRule"/>
</dbReference>
<dbReference type="GO" id="GO:0003676">
    <property type="term" value="F:nucleic acid binding"/>
    <property type="evidence" value="ECO:0007669"/>
    <property type="project" value="InterPro"/>
</dbReference>
<dbReference type="GO" id="GO:0006308">
    <property type="term" value="P:DNA catabolic process"/>
    <property type="evidence" value="ECO:0007669"/>
    <property type="project" value="UniProtKB-UniRule"/>
</dbReference>
<dbReference type="CDD" id="cd04489">
    <property type="entry name" value="ExoVII_LU_OBF"/>
    <property type="match status" value="1"/>
</dbReference>
<dbReference type="HAMAP" id="MF_00378">
    <property type="entry name" value="Exonuc_7_L"/>
    <property type="match status" value="1"/>
</dbReference>
<dbReference type="InterPro" id="IPR003753">
    <property type="entry name" value="Exonuc_VII_L"/>
</dbReference>
<dbReference type="InterPro" id="IPR020579">
    <property type="entry name" value="Exonuc_VII_lsu_C"/>
</dbReference>
<dbReference type="InterPro" id="IPR025824">
    <property type="entry name" value="OB-fold_nuc-bd_dom"/>
</dbReference>
<dbReference type="NCBIfam" id="TIGR00237">
    <property type="entry name" value="xseA"/>
    <property type="match status" value="1"/>
</dbReference>
<dbReference type="PANTHER" id="PTHR30008">
    <property type="entry name" value="EXODEOXYRIBONUCLEASE 7 LARGE SUBUNIT"/>
    <property type="match status" value="1"/>
</dbReference>
<dbReference type="PANTHER" id="PTHR30008:SF0">
    <property type="entry name" value="EXODEOXYRIBONUCLEASE 7 LARGE SUBUNIT"/>
    <property type="match status" value="1"/>
</dbReference>
<dbReference type="Pfam" id="PF02601">
    <property type="entry name" value="Exonuc_VII_L"/>
    <property type="match status" value="1"/>
</dbReference>
<dbReference type="Pfam" id="PF13742">
    <property type="entry name" value="tRNA_anti_2"/>
    <property type="match status" value="1"/>
</dbReference>
<proteinExistence type="inferred from homology"/>
<sequence>MFNIDEIYTISNFLFLCNKTIEDKIPTCWLQGEISNLTRPESGHWYFSLKDSKAQVYCVLFRFNQRHIKFNPKNGMEVLVHVTPTLYKARGNFQLIIQHLEPVGIGNLNLAFEQLKNKLVNEGLFDNIHKKPLPNIINTIGVISSSTGAVIQDIIKVLNNRYPFSDILLFDSMVQGQGSVKKLTNALNAADQSGKCDVIIIARGGGSLEDLWAFNEETLARAIFKASTPIISAIGHETDTTISDFVCDICAPTPSAAAMLVTPDRLELLANTDKLYMRLHQSYQQTLHDYQSVLNQLKLRIPISNKQIAFFSQKLDHVSINLNNHVKSTLVLNNAKLNSIFSALKQHSPIEAIKHIKILNQVSFAQLKHQIKQIININNSALYLANEKLKKAIATLTDKHKTTLSIQANSLHHLSPLNTLSRGFSITTNAKNQILSSITDIKINQAITTQLADGKLYSNIKKIEKN</sequence>
<gene>
    <name evidence="1" type="primary">xseA</name>
    <name type="ordered locus">Rmag_0750</name>
</gene>
<feature type="chain" id="PRO_1000048783" description="Exodeoxyribonuclease 7 large subunit">
    <location>
        <begin position="1"/>
        <end position="466"/>
    </location>
</feature>
<accession>A1AX20</accession>